<comment type="function">
    <text evidence="1">Catalyzes the decarboxylation of four acetate groups of uroporphyrinogen-III to yield coproporphyrinogen-III.</text>
</comment>
<comment type="catalytic activity">
    <reaction evidence="1">
        <text>uroporphyrinogen III + 4 H(+) = coproporphyrinogen III + 4 CO2</text>
        <dbReference type="Rhea" id="RHEA:19865"/>
        <dbReference type="ChEBI" id="CHEBI:15378"/>
        <dbReference type="ChEBI" id="CHEBI:16526"/>
        <dbReference type="ChEBI" id="CHEBI:57308"/>
        <dbReference type="ChEBI" id="CHEBI:57309"/>
        <dbReference type="EC" id="4.1.1.37"/>
    </reaction>
</comment>
<comment type="pathway">
    <text evidence="1">Porphyrin-containing compound metabolism; protoporphyrin-IX biosynthesis; coproporphyrinogen-III from 5-aminolevulinate: step 4/4.</text>
</comment>
<comment type="subunit">
    <text evidence="1">Homodimer.</text>
</comment>
<comment type="subcellular location">
    <subcellularLocation>
        <location evidence="1">Cytoplasm</location>
    </subcellularLocation>
</comment>
<comment type="similarity">
    <text evidence="1">Belongs to the uroporphyrinogen decarboxylase family.</text>
</comment>
<feature type="chain" id="PRO_1000078089" description="Uroporphyrinogen decarboxylase">
    <location>
        <begin position="1"/>
        <end position="354"/>
    </location>
</feature>
<feature type="binding site" evidence="1">
    <location>
        <begin position="27"/>
        <end position="31"/>
    </location>
    <ligand>
        <name>substrate</name>
    </ligand>
</feature>
<feature type="binding site" evidence="1">
    <location>
        <position position="77"/>
    </location>
    <ligand>
        <name>substrate</name>
    </ligand>
</feature>
<feature type="binding site" evidence="1">
    <location>
        <position position="154"/>
    </location>
    <ligand>
        <name>substrate</name>
    </ligand>
</feature>
<feature type="binding site" evidence="1">
    <location>
        <position position="209"/>
    </location>
    <ligand>
        <name>substrate</name>
    </ligand>
</feature>
<feature type="binding site" evidence="1">
    <location>
        <position position="327"/>
    </location>
    <ligand>
        <name>substrate</name>
    </ligand>
</feature>
<feature type="site" description="Transition state stabilizer" evidence="1">
    <location>
        <position position="77"/>
    </location>
</feature>
<evidence type="ECO:0000255" key="1">
    <source>
        <dbReference type="HAMAP-Rule" id="MF_00218"/>
    </source>
</evidence>
<accession>A8GZL8</accession>
<protein>
    <recommendedName>
        <fullName evidence="1">Uroporphyrinogen decarboxylase</fullName>
        <shortName evidence="1">UPD</shortName>
        <shortName evidence="1">URO-D</shortName>
        <ecNumber evidence="1">4.1.1.37</ecNumber>
    </recommendedName>
</protein>
<sequence length="354" mass="39504">MAELKNDRYLRALLKQPVDRTPVWMMRQAGRYLPEYKATRAEAGDFMSLCKNQDLACEVTLQPLRRYDLDAAILFSDILTVPDAMGLGLYFEAGEGPRFERPTDTIDSIKKLCIPDPEDELGYVMRAVSTIRRELKGEVPLIGFSGSPWTLATYMVEGGSSKAFEKIKKMAYEEPATLHMLLDKLADSVTLYLNAQVANGAQSLMIFDSWGGALSHHAYREFSLRYMQKIVDGLTRHADGRQVPVTLFTKGGGLWLESMAETGCDALGLDWTVDIGDARRRVGHKVALQGNMDPSVLYGTPERIHQEVDQILASYGEGTGHVFNLGHGIHQHVDPERAGSFINSVHELSPQYHK</sequence>
<proteinExistence type="inferred from homology"/>
<name>DCUP_SHEPA</name>
<gene>
    <name evidence="1" type="primary">hemE</name>
    <name type="ordered locus">Spea_0427</name>
</gene>
<reference key="1">
    <citation type="submission" date="2007-10" db="EMBL/GenBank/DDBJ databases">
        <title>Complete sequence of Shewanella pealeana ATCC 700345.</title>
        <authorList>
            <consortium name="US DOE Joint Genome Institute"/>
            <person name="Copeland A."/>
            <person name="Lucas S."/>
            <person name="Lapidus A."/>
            <person name="Barry K."/>
            <person name="Glavina del Rio T."/>
            <person name="Dalin E."/>
            <person name="Tice H."/>
            <person name="Pitluck S."/>
            <person name="Chertkov O."/>
            <person name="Brettin T."/>
            <person name="Bruce D."/>
            <person name="Detter J.C."/>
            <person name="Han C."/>
            <person name="Schmutz J."/>
            <person name="Larimer F."/>
            <person name="Land M."/>
            <person name="Hauser L."/>
            <person name="Kyrpides N."/>
            <person name="Kim E."/>
            <person name="Zhao J.-S.Z."/>
            <person name="Manno D."/>
            <person name="Hawari J."/>
            <person name="Richardson P."/>
        </authorList>
    </citation>
    <scope>NUCLEOTIDE SEQUENCE [LARGE SCALE GENOMIC DNA]</scope>
    <source>
        <strain>ATCC 700345 / ANG-SQ1</strain>
    </source>
</reference>
<dbReference type="EC" id="4.1.1.37" evidence="1"/>
<dbReference type="EMBL" id="CP000851">
    <property type="protein sequence ID" value="ABV85755.1"/>
    <property type="molecule type" value="Genomic_DNA"/>
</dbReference>
<dbReference type="RefSeq" id="WP_012153693.1">
    <property type="nucleotide sequence ID" value="NC_009901.1"/>
</dbReference>
<dbReference type="SMR" id="A8GZL8"/>
<dbReference type="STRING" id="398579.Spea_0427"/>
<dbReference type="KEGG" id="spl:Spea_0427"/>
<dbReference type="eggNOG" id="COG0407">
    <property type="taxonomic scope" value="Bacteria"/>
</dbReference>
<dbReference type="HOGENOM" id="CLU_040933_0_0_6"/>
<dbReference type="OrthoDB" id="9806656at2"/>
<dbReference type="UniPathway" id="UPA00251">
    <property type="reaction ID" value="UER00321"/>
</dbReference>
<dbReference type="Proteomes" id="UP000002608">
    <property type="component" value="Chromosome"/>
</dbReference>
<dbReference type="GO" id="GO:0005829">
    <property type="term" value="C:cytosol"/>
    <property type="evidence" value="ECO:0007669"/>
    <property type="project" value="TreeGrafter"/>
</dbReference>
<dbReference type="GO" id="GO:0004853">
    <property type="term" value="F:uroporphyrinogen decarboxylase activity"/>
    <property type="evidence" value="ECO:0007669"/>
    <property type="project" value="UniProtKB-UniRule"/>
</dbReference>
<dbReference type="GO" id="GO:0019353">
    <property type="term" value="P:protoporphyrinogen IX biosynthetic process from glutamate"/>
    <property type="evidence" value="ECO:0007669"/>
    <property type="project" value="TreeGrafter"/>
</dbReference>
<dbReference type="CDD" id="cd00717">
    <property type="entry name" value="URO-D"/>
    <property type="match status" value="1"/>
</dbReference>
<dbReference type="FunFam" id="3.20.20.210:FF:000001">
    <property type="entry name" value="Uroporphyrinogen decarboxylase"/>
    <property type="match status" value="1"/>
</dbReference>
<dbReference type="Gene3D" id="3.20.20.210">
    <property type="match status" value="1"/>
</dbReference>
<dbReference type="HAMAP" id="MF_00218">
    <property type="entry name" value="URO_D"/>
    <property type="match status" value="1"/>
</dbReference>
<dbReference type="InterPro" id="IPR038071">
    <property type="entry name" value="UROD/MetE-like_sf"/>
</dbReference>
<dbReference type="InterPro" id="IPR006361">
    <property type="entry name" value="Uroporphyrinogen_deCO2ase_HemE"/>
</dbReference>
<dbReference type="InterPro" id="IPR000257">
    <property type="entry name" value="Uroporphyrinogen_deCOase"/>
</dbReference>
<dbReference type="NCBIfam" id="TIGR01464">
    <property type="entry name" value="hemE"/>
    <property type="match status" value="1"/>
</dbReference>
<dbReference type="PANTHER" id="PTHR21091">
    <property type="entry name" value="METHYLTETRAHYDROFOLATE:HOMOCYSTEINE METHYLTRANSFERASE RELATED"/>
    <property type="match status" value="1"/>
</dbReference>
<dbReference type="PANTHER" id="PTHR21091:SF169">
    <property type="entry name" value="UROPORPHYRINOGEN DECARBOXYLASE"/>
    <property type="match status" value="1"/>
</dbReference>
<dbReference type="Pfam" id="PF01208">
    <property type="entry name" value="URO-D"/>
    <property type="match status" value="1"/>
</dbReference>
<dbReference type="SUPFAM" id="SSF51726">
    <property type="entry name" value="UROD/MetE-like"/>
    <property type="match status" value="1"/>
</dbReference>
<dbReference type="PROSITE" id="PS00906">
    <property type="entry name" value="UROD_1"/>
    <property type="match status" value="1"/>
</dbReference>
<dbReference type="PROSITE" id="PS00907">
    <property type="entry name" value="UROD_2"/>
    <property type="match status" value="1"/>
</dbReference>
<keyword id="KW-0963">Cytoplasm</keyword>
<keyword id="KW-0210">Decarboxylase</keyword>
<keyword id="KW-0456">Lyase</keyword>
<keyword id="KW-0627">Porphyrin biosynthesis</keyword>
<keyword id="KW-1185">Reference proteome</keyword>
<organism>
    <name type="scientific">Shewanella pealeana (strain ATCC 700345 / ANG-SQ1)</name>
    <dbReference type="NCBI Taxonomy" id="398579"/>
    <lineage>
        <taxon>Bacteria</taxon>
        <taxon>Pseudomonadati</taxon>
        <taxon>Pseudomonadota</taxon>
        <taxon>Gammaproteobacteria</taxon>
        <taxon>Alteromonadales</taxon>
        <taxon>Shewanellaceae</taxon>
        <taxon>Shewanella</taxon>
    </lineage>
</organism>